<gene>
    <name evidence="1" type="primary">atpH</name>
    <name type="ordered locus">CGSHiGG_05665</name>
</gene>
<comment type="function">
    <text evidence="1">F(1)F(0) ATP synthase produces ATP from ADP in the presence of a proton or sodium gradient. F-type ATPases consist of two structural domains, F(1) containing the extramembraneous catalytic core and F(0) containing the membrane proton channel, linked together by a central stalk and a peripheral stalk. During catalysis, ATP synthesis in the catalytic domain of F(1) is coupled via a rotary mechanism of the central stalk subunits to proton translocation.</text>
</comment>
<comment type="function">
    <text evidence="1">This protein is part of the stalk that links CF(0) to CF(1). It either transmits conformational changes from CF(0) to CF(1) or is implicated in proton conduction.</text>
</comment>
<comment type="subunit">
    <text evidence="1">F-type ATPases have 2 components, F(1) - the catalytic core - and F(0) - the membrane proton channel. F(1) has five subunits: alpha(3), beta(3), gamma(1), delta(1), epsilon(1). F(0) has three main subunits: a(1), b(2) and c(10-14). The alpha and beta chains form an alternating ring which encloses part of the gamma chain. F(1) is attached to F(0) by a central stalk formed by the gamma and epsilon chains, while a peripheral stalk is formed by the delta and b chains.</text>
</comment>
<comment type="subcellular location">
    <subcellularLocation>
        <location evidence="1">Cell inner membrane</location>
        <topology evidence="1">Peripheral membrane protein</topology>
    </subcellularLocation>
</comment>
<comment type="similarity">
    <text evidence="1">Belongs to the ATPase delta chain family.</text>
</comment>
<accession>A5UGZ2</accession>
<name>ATPD_HAEIG</name>
<protein>
    <recommendedName>
        <fullName evidence="1">ATP synthase subunit delta</fullName>
    </recommendedName>
    <alternativeName>
        <fullName evidence="1">ATP synthase F(1) sector subunit delta</fullName>
    </alternativeName>
    <alternativeName>
        <fullName evidence="1">F-type ATPase subunit delta</fullName>
        <shortName evidence="1">F-ATPase subunit delta</shortName>
    </alternativeName>
</protein>
<evidence type="ECO:0000255" key="1">
    <source>
        <dbReference type="HAMAP-Rule" id="MF_01416"/>
    </source>
</evidence>
<proteinExistence type="inferred from homology"/>
<keyword id="KW-0066">ATP synthesis</keyword>
<keyword id="KW-0997">Cell inner membrane</keyword>
<keyword id="KW-1003">Cell membrane</keyword>
<keyword id="KW-0139">CF(1)</keyword>
<keyword id="KW-0375">Hydrogen ion transport</keyword>
<keyword id="KW-0406">Ion transport</keyword>
<keyword id="KW-0472">Membrane</keyword>
<keyword id="KW-0813">Transport</keyword>
<sequence length="177" mass="19451">MSELTTIARPYAKAAFDFAIEQSAVEKWTEMLGFAAAVAEDETVKAYLSSSLSAQKLADTVISICGEQLDQYGQNLIRLMAENKRLSAIPAVFEEFKHHVEEHQAIAEVEVTSAQPLNATQIEKIAAAMEKRLARKVKLNCNVDNALIAGVIVRTEDFVIDGSSRGQLTRLANELQL</sequence>
<dbReference type="EMBL" id="CP000672">
    <property type="protein sequence ID" value="ABR00048.1"/>
    <property type="molecule type" value="Genomic_DNA"/>
</dbReference>
<dbReference type="SMR" id="A5UGZ2"/>
<dbReference type="KEGG" id="hiq:CGSHiGG_05665"/>
<dbReference type="HOGENOM" id="CLU_085114_3_0_6"/>
<dbReference type="Proteomes" id="UP000001990">
    <property type="component" value="Chromosome"/>
</dbReference>
<dbReference type="GO" id="GO:0005886">
    <property type="term" value="C:plasma membrane"/>
    <property type="evidence" value="ECO:0007669"/>
    <property type="project" value="UniProtKB-SubCell"/>
</dbReference>
<dbReference type="GO" id="GO:0045259">
    <property type="term" value="C:proton-transporting ATP synthase complex"/>
    <property type="evidence" value="ECO:0007669"/>
    <property type="project" value="UniProtKB-KW"/>
</dbReference>
<dbReference type="GO" id="GO:0046933">
    <property type="term" value="F:proton-transporting ATP synthase activity, rotational mechanism"/>
    <property type="evidence" value="ECO:0007669"/>
    <property type="project" value="UniProtKB-UniRule"/>
</dbReference>
<dbReference type="Gene3D" id="1.10.520.20">
    <property type="entry name" value="N-terminal domain of the delta subunit of the F1F0-ATP synthase"/>
    <property type="match status" value="1"/>
</dbReference>
<dbReference type="HAMAP" id="MF_01416">
    <property type="entry name" value="ATP_synth_delta_bact"/>
    <property type="match status" value="1"/>
</dbReference>
<dbReference type="InterPro" id="IPR026015">
    <property type="entry name" value="ATP_synth_OSCP/delta_N_sf"/>
</dbReference>
<dbReference type="InterPro" id="IPR020781">
    <property type="entry name" value="ATPase_OSCP/d_CS"/>
</dbReference>
<dbReference type="InterPro" id="IPR000711">
    <property type="entry name" value="ATPase_OSCP/dsu"/>
</dbReference>
<dbReference type="NCBIfam" id="TIGR01145">
    <property type="entry name" value="ATP_synt_delta"/>
    <property type="match status" value="1"/>
</dbReference>
<dbReference type="NCBIfam" id="NF004402">
    <property type="entry name" value="PRK05758.2-2"/>
    <property type="match status" value="1"/>
</dbReference>
<dbReference type="NCBIfam" id="NF004404">
    <property type="entry name" value="PRK05758.2-5"/>
    <property type="match status" value="1"/>
</dbReference>
<dbReference type="PANTHER" id="PTHR11910">
    <property type="entry name" value="ATP SYNTHASE DELTA CHAIN"/>
    <property type="match status" value="1"/>
</dbReference>
<dbReference type="Pfam" id="PF00213">
    <property type="entry name" value="OSCP"/>
    <property type="match status" value="1"/>
</dbReference>
<dbReference type="PRINTS" id="PR00125">
    <property type="entry name" value="ATPASEDELTA"/>
</dbReference>
<dbReference type="SUPFAM" id="SSF47928">
    <property type="entry name" value="N-terminal domain of the delta subunit of the F1F0-ATP synthase"/>
    <property type="match status" value="1"/>
</dbReference>
<dbReference type="PROSITE" id="PS00389">
    <property type="entry name" value="ATPASE_DELTA"/>
    <property type="match status" value="1"/>
</dbReference>
<reference key="1">
    <citation type="journal article" date="2007" name="Genome Biol.">
        <title>Characterization and modeling of the Haemophilus influenzae core and supragenomes based on the complete genomic sequences of Rd and 12 clinical nontypeable strains.</title>
        <authorList>
            <person name="Hogg J.S."/>
            <person name="Hu F.Z."/>
            <person name="Janto B."/>
            <person name="Boissy R."/>
            <person name="Hayes J."/>
            <person name="Keefe R."/>
            <person name="Post J.C."/>
            <person name="Ehrlich G.D."/>
        </authorList>
    </citation>
    <scope>NUCLEOTIDE SEQUENCE [LARGE SCALE GENOMIC DNA]</scope>
    <source>
        <strain>PittGG</strain>
    </source>
</reference>
<organism>
    <name type="scientific">Haemophilus influenzae (strain PittGG)</name>
    <dbReference type="NCBI Taxonomy" id="374931"/>
    <lineage>
        <taxon>Bacteria</taxon>
        <taxon>Pseudomonadati</taxon>
        <taxon>Pseudomonadota</taxon>
        <taxon>Gammaproteobacteria</taxon>
        <taxon>Pasteurellales</taxon>
        <taxon>Pasteurellaceae</taxon>
        <taxon>Haemophilus</taxon>
    </lineage>
</organism>
<feature type="chain" id="PRO_1000184729" description="ATP synthase subunit delta">
    <location>
        <begin position="1"/>
        <end position="177"/>
    </location>
</feature>